<evidence type="ECO:0000255" key="1">
    <source>
        <dbReference type="HAMAP-Rule" id="MF_01458"/>
    </source>
</evidence>
<evidence type="ECO:0000256" key="2">
    <source>
        <dbReference type="SAM" id="MobiDB-lite"/>
    </source>
</evidence>
<accession>Q67JH0</accession>
<reference key="1">
    <citation type="journal article" date="2004" name="Nucleic Acids Res.">
        <title>Genome sequence of Symbiobacterium thermophilum, an uncultivable bacterium that depends on microbial commensalism.</title>
        <authorList>
            <person name="Ueda K."/>
            <person name="Yamashita A."/>
            <person name="Ishikawa J."/>
            <person name="Shimada M."/>
            <person name="Watsuji T."/>
            <person name="Morimura K."/>
            <person name="Ikeda H."/>
            <person name="Hattori M."/>
            <person name="Beppu T."/>
        </authorList>
    </citation>
    <scope>NUCLEOTIDE SEQUENCE [LARGE SCALE GENOMIC DNA]</scope>
    <source>
        <strain>DSM 24528 / JCM 14929 / IAM 14863 / T</strain>
    </source>
</reference>
<dbReference type="EC" id="3.4.24.-" evidence="1"/>
<dbReference type="EMBL" id="AP006840">
    <property type="protein sequence ID" value="BAD42180.1"/>
    <property type="molecule type" value="Genomic_DNA"/>
</dbReference>
<dbReference type="RefSeq" id="WP_011197311.1">
    <property type="nucleotide sequence ID" value="NC_006177.1"/>
</dbReference>
<dbReference type="SMR" id="Q67JH0"/>
<dbReference type="STRING" id="292459.STH3198"/>
<dbReference type="MEROPS" id="M41.021"/>
<dbReference type="KEGG" id="sth:STH3198"/>
<dbReference type="eggNOG" id="COG0465">
    <property type="taxonomic scope" value="Bacteria"/>
</dbReference>
<dbReference type="HOGENOM" id="CLU_000688_16_2_9"/>
<dbReference type="OrthoDB" id="9809379at2"/>
<dbReference type="Proteomes" id="UP000000417">
    <property type="component" value="Chromosome"/>
</dbReference>
<dbReference type="GO" id="GO:0005886">
    <property type="term" value="C:plasma membrane"/>
    <property type="evidence" value="ECO:0007669"/>
    <property type="project" value="UniProtKB-SubCell"/>
</dbReference>
<dbReference type="GO" id="GO:0005524">
    <property type="term" value="F:ATP binding"/>
    <property type="evidence" value="ECO:0007669"/>
    <property type="project" value="UniProtKB-UniRule"/>
</dbReference>
<dbReference type="GO" id="GO:0016887">
    <property type="term" value="F:ATP hydrolysis activity"/>
    <property type="evidence" value="ECO:0007669"/>
    <property type="project" value="UniProtKB-UniRule"/>
</dbReference>
<dbReference type="GO" id="GO:0004176">
    <property type="term" value="F:ATP-dependent peptidase activity"/>
    <property type="evidence" value="ECO:0007669"/>
    <property type="project" value="InterPro"/>
</dbReference>
<dbReference type="GO" id="GO:0004222">
    <property type="term" value="F:metalloendopeptidase activity"/>
    <property type="evidence" value="ECO:0007669"/>
    <property type="project" value="InterPro"/>
</dbReference>
<dbReference type="GO" id="GO:0008270">
    <property type="term" value="F:zinc ion binding"/>
    <property type="evidence" value="ECO:0007669"/>
    <property type="project" value="UniProtKB-UniRule"/>
</dbReference>
<dbReference type="GO" id="GO:0030163">
    <property type="term" value="P:protein catabolic process"/>
    <property type="evidence" value="ECO:0007669"/>
    <property type="project" value="UniProtKB-UniRule"/>
</dbReference>
<dbReference type="GO" id="GO:0006508">
    <property type="term" value="P:proteolysis"/>
    <property type="evidence" value="ECO:0007669"/>
    <property type="project" value="UniProtKB-KW"/>
</dbReference>
<dbReference type="CDD" id="cd19501">
    <property type="entry name" value="RecA-like_FtsH"/>
    <property type="match status" value="1"/>
</dbReference>
<dbReference type="FunFam" id="1.10.8.60:FF:000001">
    <property type="entry name" value="ATP-dependent zinc metalloprotease FtsH"/>
    <property type="match status" value="1"/>
</dbReference>
<dbReference type="FunFam" id="1.20.58.760:FF:000001">
    <property type="entry name" value="ATP-dependent zinc metalloprotease FtsH"/>
    <property type="match status" value="1"/>
</dbReference>
<dbReference type="FunFam" id="3.40.50.300:FF:000001">
    <property type="entry name" value="ATP-dependent zinc metalloprotease FtsH"/>
    <property type="match status" value="1"/>
</dbReference>
<dbReference type="Gene3D" id="1.10.8.60">
    <property type="match status" value="1"/>
</dbReference>
<dbReference type="Gene3D" id="3.30.720.210">
    <property type="match status" value="1"/>
</dbReference>
<dbReference type="Gene3D" id="3.40.50.300">
    <property type="entry name" value="P-loop containing nucleotide triphosphate hydrolases"/>
    <property type="match status" value="1"/>
</dbReference>
<dbReference type="Gene3D" id="1.20.58.760">
    <property type="entry name" value="Peptidase M41"/>
    <property type="match status" value="1"/>
</dbReference>
<dbReference type="HAMAP" id="MF_01458">
    <property type="entry name" value="FtsH"/>
    <property type="match status" value="1"/>
</dbReference>
<dbReference type="InterPro" id="IPR003593">
    <property type="entry name" value="AAA+_ATPase"/>
</dbReference>
<dbReference type="InterPro" id="IPR041569">
    <property type="entry name" value="AAA_lid_3"/>
</dbReference>
<dbReference type="InterPro" id="IPR003959">
    <property type="entry name" value="ATPase_AAA_core"/>
</dbReference>
<dbReference type="InterPro" id="IPR003960">
    <property type="entry name" value="ATPase_AAA_CS"/>
</dbReference>
<dbReference type="InterPro" id="IPR005936">
    <property type="entry name" value="FtsH"/>
</dbReference>
<dbReference type="InterPro" id="IPR027417">
    <property type="entry name" value="P-loop_NTPase"/>
</dbReference>
<dbReference type="InterPro" id="IPR011546">
    <property type="entry name" value="Pept_M41_FtsH_extracell"/>
</dbReference>
<dbReference type="InterPro" id="IPR000642">
    <property type="entry name" value="Peptidase_M41"/>
</dbReference>
<dbReference type="InterPro" id="IPR037219">
    <property type="entry name" value="Peptidase_M41-like"/>
</dbReference>
<dbReference type="NCBIfam" id="TIGR01241">
    <property type="entry name" value="FtsH_fam"/>
    <property type="match status" value="1"/>
</dbReference>
<dbReference type="PANTHER" id="PTHR23076:SF97">
    <property type="entry name" value="ATP-DEPENDENT ZINC METALLOPROTEASE YME1L1"/>
    <property type="match status" value="1"/>
</dbReference>
<dbReference type="PANTHER" id="PTHR23076">
    <property type="entry name" value="METALLOPROTEASE M41 FTSH"/>
    <property type="match status" value="1"/>
</dbReference>
<dbReference type="Pfam" id="PF00004">
    <property type="entry name" value="AAA"/>
    <property type="match status" value="1"/>
</dbReference>
<dbReference type="Pfam" id="PF17862">
    <property type="entry name" value="AAA_lid_3"/>
    <property type="match status" value="1"/>
</dbReference>
<dbReference type="Pfam" id="PF06480">
    <property type="entry name" value="FtsH_ext"/>
    <property type="match status" value="1"/>
</dbReference>
<dbReference type="Pfam" id="PF01434">
    <property type="entry name" value="Peptidase_M41"/>
    <property type="match status" value="1"/>
</dbReference>
<dbReference type="SMART" id="SM00382">
    <property type="entry name" value="AAA"/>
    <property type="match status" value="1"/>
</dbReference>
<dbReference type="SUPFAM" id="SSF140990">
    <property type="entry name" value="FtsH protease domain-like"/>
    <property type="match status" value="1"/>
</dbReference>
<dbReference type="SUPFAM" id="SSF52540">
    <property type="entry name" value="P-loop containing nucleoside triphosphate hydrolases"/>
    <property type="match status" value="1"/>
</dbReference>
<dbReference type="PROSITE" id="PS00674">
    <property type="entry name" value="AAA"/>
    <property type="match status" value="1"/>
</dbReference>
<name>FTSH3_SYMTH</name>
<sequence>MNKLFRSLAFYMLILVISVAIAVQLGGTSQQTTQLVYSDLVRYIQQGEVRSITLSGAYAEGELVSGEKFTVQLPPSSSQAPLVEMLQQHPNIKLDFRQDNTSGIWAMLLQTLVPVVLVLLAFFFIMQQTQGSGNRVMQFGKSRARLVTDDRKRVTFDDVAGIDEVKEELAEIVDFLKHPKRYLELGARIPKGVLLYGPPGTGKTLLAKAVAGEAGVPFFSISGSDFVEMFVGVGASRVRDLFEQAKKNSPCIVFIDEIDAVGRQRGAGYGGGHDEREQTLNQLLVEMDGFSANEGIIIIAATNRPDVLDPALLRPGRFDRQIVIDRPDLKGRLAIFQVHAKGKPLEPDVDLEVLAKRTPGFTGADIANLMNEAALLAARRRKKKISMQDVEDAIDRVLAGGPEKKSRVISEKEKRVTAYHEAGHAVVGHMLPHMDPLHKITIIPRGRAMGYTLFLPVEDRYNISKSEILDRMTMALGGRAAEEITFGEITSGAQDDIERTTQWARRMVTEWGMSEKLGPLTYGMKQDEVFLARDMTRLRNYSEEVAGLIDEEVRKFVHMAYQRAIDILTEHRDALEKVSEVLLEKETLEGKELQDLLEQLLPPRPKPEPLKPRMVGGGTSQVAPAF</sequence>
<proteinExistence type="inferred from homology"/>
<organism>
    <name type="scientific">Symbiobacterium thermophilum (strain DSM 24528 / JCM 14929 / IAM 14863 / T)</name>
    <dbReference type="NCBI Taxonomy" id="292459"/>
    <lineage>
        <taxon>Bacteria</taxon>
        <taxon>Bacillati</taxon>
        <taxon>Bacillota</taxon>
        <taxon>Clostridia</taxon>
        <taxon>Eubacteriales</taxon>
        <taxon>Symbiobacteriaceae</taxon>
        <taxon>Symbiobacterium</taxon>
    </lineage>
</organism>
<gene>
    <name evidence="1" type="primary">ftsH3</name>
    <name type="ordered locus">STH3198</name>
</gene>
<comment type="function">
    <text evidence="1">Acts as a processive, ATP-dependent zinc metallopeptidase for both cytoplasmic and membrane proteins. Plays a role in the quality control of integral membrane proteins.</text>
</comment>
<comment type="cofactor">
    <cofactor evidence="1">
        <name>Zn(2+)</name>
        <dbReference type="ChEBI" id="CHEBI:29105"/>
    </cofactor>
    <text evidence="1">Binds 1 zinc ion per subunit.</text>
</comment>
<comment type="subunit">
    <text evidence="1">Homohexamer.</text>
</comment>
<comment type="subcellular location">
    <subcellularLocation>
        <location evidence="1">Cell membrane</location>
        <topology evidence="1">Multi-pass membrane protein</topology>
        <orientation evidence="1">Cytoplasmic side</orientation>
    </subcellularLocation>
</comment>
<comment type="similarity">
    <text evidence="1">In the central section; belongs to the AAA ATPase family.</text>
</comment>
<comment type="similarity">
    <text evidence="1">In the C-terminal section; belongs to the peptidase M41 family.</text>
</comment>
<feature type="chain" id="PRO_0000400402" description="ATP-dependent zinc metalloprotease FtsH 3">
    <location>
        <begin position="1"/>
        <end position="626"/>
    </location>
</feature>
<feature type="topological domain" description="Cytoplasmic" evidence="1">
    <location>
        <begin position="1"/>
        <end position="7"/>
    </location>
</feature>
<feature type="transmembrane region" description="Helical" evidence="1">
    <location>
        <begin position="8"/>
        <end position="28"/>
    </location>
</feature>
<feature type="topological domain" description="Extracellular" evidence="1">
    <location>
        <begin position="29"/>
        <end position="103"/>
    </location>
</feature>
<feature type="transmembrane region" description="Helical" evidence="1">
    <location>
        <begin position="104"/>
        <end position="124"/>
    </location>
</feature>
<feature type="topological domain" description="Cytoplasmic" evidence="1">
    <location>
        <begin position="125"/>
        <end position="626"/>
    </location>
</feature>
<feature type="region of interest" description="Disordered" evidence="2">
    <location>
        <begin position="602"/>
        <end position="626"/>
    </location>
</feature>
<feature type="active site" evidence="1">
    <location>
        <position position="421"/>
    </location>
</feature>
<feature type="binding site" evidence="1">
    <location>
        <begin position="197"/>
        <end position="204"/>
    </location>
    <ligand>
        <name>ATP</name>
        <dbReference type="ChEBI" id="CHEBI:30616"/>
    </ligand>
</feature>
<feature type="binding site" evidence="1">
    <location>
        <position position="420"/>
    </location>
    <ligand>
        <name>Zn(2+)</name>
        <dbReference type="ChEBI" id="CHEBI:29105"/>
        <note>catalytic</note>
    </ligand>
</feature>
<feature type="binding site" evidence="1">
    <location>
        <position position="424"/>
    </location>
    <ligand>
        <name>Zn(2+)</name>
        <dbReference type="ChEBI" id="CHEBI:29105"/>
        <note>catalytic</note>
    </ligand>
</feature>
<feature type="binding site" evidence="1">
    <location>
        <position position="496"/>
    </location>
    <ligand>
        <name>Zn(2+)</name>
        <dbReference type="ChEBI" id="CHEBI:29105"/>
        <note>catalytic</note>
    </ligand>
</feature>
<protein>
    <recommendedName>
        <fullName evidence="1">ATP-dependent zinc metalloprotease FtsH 3</fullName>
        <ecNumber evidence="1">3.4.24.-</ecNumber>
    </recommendedName>
</protein>
<keyword id="KW-0067">ATP-binding</keyword>
<keyword id="KW-1003">Cell membrane</keyword>
<keyword id="KW-0378">Hydrolase</keyword>
<keyword id="KW-0472">Membrane</keyword>
<keyword id="KW-0479">Metal-binding</keyword>
<keyword id="KW-0482">Metalloprotease</keyword>
<keyword id="KW-0547">Nucleotide-binding</keyword>
<keyword id="KW-0645">Protease</keyword>
<keyword id="KW-1185">Reference proteome</keyword>
<keyword id="KW-0812">Transmembrane</keyword>
<keyword id="KW-1133">Transmembrane helix</keyword>
<keyword id="KW-0862">Zinc</keyword>